<gene>
    <name evidence="1" type="primary">rpsI</name>
    <name evidence="1" type="synonym">rps9</name>
    <name type="ordered locus">P9515_17131</name>
</gene>
<dbReference type="EMBL" id="CP000552">
    <property type="protein sequence ID" value="ABM72920.1"/>
    <property type="molecule type" value="Genomic_DNA"/>
</dbReference>
<dbReference type="RefSeq" id="WP_011821012.1">
    <property type="nucleotide sequence ID" value="NC_008817.1"/>
</dbReference>
<dbReference type="SMR" id="A2BYQ9"/>
<dbReference type="STRING" id="167542.P9515_17131"/>
<dbReference type="GeneID" id="60201259"/>
<dbReference type="KEGG" id="pmc:P9515_17131"/>
<dbReference type="eggNOG" id="COG0103">
    <property type="taxonomic scope" value="Bacteria"/>
</dbReference>
<dbReference type="HOGENOM" id="CLU_046483_2_1_3"/>
<dbReference type="OrthoDB" id="9803965at2"/>
<dbReference type="Proteomes" id="UP000001589">
    <property type="component" value="Chromosome"/>
</dbReference>
<dbReference type="GO" id="GO:0022627">
    <property type="term" value="C:cytosolic small ribosomal subunit"/>
    <property type="evidence" value="ECO:0007669"/>
    <property type="project" value="TreeGrafter"/>
</dbReference>
<dbReference type="GO" id="GO:0003723">
    <property type="term" value="F:RNA binding"/>
    <property type="evidence" value="ECO:0007669"/>
    <property type="project" value="TreeGrafter"/>
</dbReference>
<dbReference type="GO" id="GO:0003735">
    <property type="term" value="F:structural constituent of ribosome"/>
    <property type="evidence" value="ECO:0007669"/>
    <property type="project" value="InterPro"/>
</dbReference>
<dbReference type="GO" id="GO:0006412">
    <property type="term" value="P:translation"/>
    <property type="evidence" value="ECO:0007669"/>
    <property type="project" value="UniProtKB-UniRule"/>
</dbReference>
<dbReference type="FunFam" id="3.30.230.10:FF:000001">
    <property type="entry name" value="30S ribosomal protein S9"/>
    <property type="match status" value="1"/>
</dbReference>
<dbReference type="Gene3D" id="3.30.230.10">
    <property type="match status" value="1"/>
</dbReference>
<dbReference type="HAMAP" id="MF_00532_B">
    <property type="entry name" value="Ribosomal_uS9_B"/>
    <property type="match status" value="1"/>
</dbReference>
<dbReference type="InterPro" id="IPR020568">
    <property type="entry name" value="Ribosomal_Su5_D2-typ_SF"/>
</dbReference>
<dbReference type="InterPro" id="IPR000754">
    <property type="entry name" value="Ribosomal_uS9"/>
</dbReference>
<dbReference type="InterPro" id="IPR023035">
    <property type="entry name" value="Ribosomal_uS9_bac/plastid"/>
</dbReference>
<dbReference type="InterPro" id="IPR020574">
    <property type="entry name" value="Ribosomal_uS9_CS"/>
</dbReference>
<dbReference type="InterPro" id="IPR014721">
    <property type="entry name" value="Ribsml_uS5_D2-typ_fold_subgr"/>
</dbReference>
<dbReference type="NCBIfam" id="NF001099">
    <property type="entry name" value="PRK00132.1"/>
    <property type="match status" value="1"/>
</dbReference>
<dbReference type="PANTHER" id="PTHR21569">
    <property type="entry name" value="RIBOSOMAL PROTEIN S9"/>
    <property type="match status" value="1"/>
</dbReference>
<dbReference type="PANTHER" id="PTHR21569:SF1">
    <property type="entry name" value="SMALL RIBOSOMAL SUBUNIT PROTEIN US9M"/>
    <property type="match status" value="1"/>
</dbReference>
<dbReference type="Pfam" id="PF00380">
    <property type="entry name" value="Ribosomal_S9"/>
    <property type="match status" value="1"/>
</dbReference>
<dbReference type="SUPFAM" id="SSF54211">
    <property type="entry name" value="Ribosomal protein S5 domain 2-like"/>
    <property type="match status" value="1"/>
</dbReference>
<dbReference type="PROSITE" id="PS00360">
    <property type="entry name" value="RIBOSOMAL_S9"/>
    <property type="match status" value="1"/>
</dbReference>
<sequence>MNSQIKNKAVYWGTGRRKTSVARVRLIPGNGQIKINGRSGDDYLNFNPSHLNSVKAPLQTLGLENSYDIFVNVFGGGLTGQADAIKQGAARALCDLSPDNRKPLKTEGHLSRDPRAKERRKYGLKKARKAPQFSKR</sequence>
<proteinExistence type="inferred from homology"/>
<reference key="1">
    <citation type="journal article" date="2007" name="PLoS Genet.">
        <title>Patterns and implications of gene gain and loss in the evolution of Prochlorococcus.</title>
        <authorList>
            <person name="Kettler G.C."/>
            <person name="Martiny A.C."/>
            <person name="Huang K."/>
            <person name="Zucker J."/>
            <person name="Coleman M.L."/>
            <person name="Rodrigue S."/>
            <person name="Chen F."/>
            <person name="Lapidus A."/>
            <person name="Ferriera S."/>
            <person name="Johnson J."/>
            <person name="Steglich C."/>
            <person name="Church G.M."/>
            <person name="Richardson P."/>
            <person name="Chisholm S.W."/>
        </authorList>
    </citation>
    <scope>NUCLEOTIDE SEQUENCE [LARGE SCALE GENOMIC DNA]</scope>
    <source>
        <strain>MIT 9515</strain>
    </source>
</reference>
<name>RS9_PROM5</name>
<comment type="similarity">
    <text evidence="1">Belongs to the universal ribosomal protein uS9 family.</text>
</comment>
<protein>
    <recommendedName>
        <fullName evidence="1">Small ribosomal subunit protein uS9</fullName>
    </recommendedName>
    <alternativeName>
        <fullName evidence="3">30S ribosomal protein S9</fullName>
    </alternativeName>
</protein>
<evidence type="ECO:0000255" key="1">
    <source>
        <dbReference type="HAMAP-Rule" id="MF_00532"/>
    </source>
</evidence>
<evidence type="ECO:0000256" key="2">
    <source>
        <dbReference type="SAM" id="MobiDB-lite"/>
    </source>
</evidence>
<evidence type="ECO:0000305" key="3"/>
<accession>A2BYQ9</accession>
<keyword id="KW-0687">Ribonucleoprotein</keyword>
<keyword id="KW-0689">Ribosomal protein</keyword>
<feature type="chain" id="PRO_1000051286" description="Small ribosomal subunit protein uS9">
    <location>
        <begin position="1"/>
        <end position="136"/>
    </location>
</feature>
<feature type="region of interest" description="Disordered" evidence="2">
    <location>
        <begin position="96"/>
        <end position="136"/>
    </location>
</feature>
<feature type="compositionally biased region" description="Basic and acidic residues" evidence="2">
    <location>
        <begin position="98"/>
        <end position="116"/>
    </location>
</feature>
<feature type="compositionally biased region" description="Basic residues" evidence="2">
    <location>
        <begin position="117"/>
        <end position="136"/>
    </location>
</feature>
<organism>
    <name type="scientific">Prochlorococcus marinus (strain MIT 9515)</name>
    <dbReference type="NCBI Taxonomy" id="167542"/>
    <lineage>
        <taxon>Bacteria</taxon>
        <taxon>Bacillati</taxon>
        <taxon>Cyanobacteriota</taxon>
        <taxon>Cyanophyceae</taxon>
        <taxon>Synechococcales</taxon>
        <taxon>Prochlorococcaceae</taxon>
        <taxon>Prochlorococcus</taxon>
    </lineage>
</organism>